<keyword id="KW-0391">Immunity</keyword>
<keyword id="KW-0399">Innate immunity</keyword>
<keyword id="KW-1185">Reference proteome</keyword>
<comment type="function">
    <text evidence="1">Acts as a negative regulator of innate and adaptive immunity by maintaining immune homeostasis. Negative regulator of Toll-like receptor and T-cell receptor function. Prevents hyperresponsiveness of the immune system and maintains immune homeostasis. Inhibits jun/ap1 and NF-kappa-B activation. Promotes Fas-induced apoptosis (By similarity).</text>
</comment>
<comment type="domain">
    <text evidence="1">The central region was initially thought to constitute a DED (death effector) domain. However, 3D-structure data reveal a previously uncharacterized fold that is different from the predicted fold of a DED (death effector) domain. It consists of a large, hydrophobic central cavity that is poised for cofactor binding (By similarity).</text>
</comment>
<comment type="similarity">
    <text evidence="2">Belongs to the TNFAIP8 family. TNFAIP8L2 subfamily.</text>
</comment>
<gene>
    <name type="primary">tnfaip8l2</name>
</gene>
<evidence type="ECO:0000250" key="1"/>
<evidence type="ECO:0000305" key="2"/>
<dbReference type="EMBL" id="BT046856">
    <property type="protein sequence ID" value="ACI66657.1"/>
    <property type="molecule type" value="mRNA"/>
</dbReference>
<dbReference type="RefSeq" id="NP_001134219.1">
    <property type="nucleotide sequence ID" value="NM_001140747.1"/>
</dbReference>
<dbReference type="RefSeq" id="XP_013996982.1">
    <property type="nucleotide sequence ID" value="XM_014141507.1"/>
</dbReference>
<dbReference type="SMR" id="B5X737"/>
<dbReference type="STRING" id="8030.ENSSSAP00000083683"/>
<dbReference type="PaxDb" id="8030-ENSSSAP00000083683"/>
<dbReference type="Ensembl" id="ENSSSAT00020129374">
    <property type="protein sequence ID" value="ENSSSAP00020098538"/>
    <property type="gene ID" value="ENSSSAG00020057630"/>
</dbReference>
<dbReference type="Ensembl" id="ENSSSAT00070069483">
    <property type="protein sequence ID" value="ENSSSAP00070066581"/>
    <property type="gene ID" value="ENSSSAG00070043216"/>
</dbReference>
<dbReference type="Ensembl" id="ENSSSAT00075124049">
    <property type="protein sequence ID" value="ENSSSAP00075092612"/>
    <property type="gene ID" value="ENSSSAG00075058798"/>
</dbReference>
<dbReference type="GeneID" id="100195718"/>
<dbReference type="KEGG" id="sasa:100195718"/>
<dbReference type="CTD" id="100195718"/>
<dbReference type="OMA" id="GTLWPNL"/>
<dbReference type="OrthoDB" id="323956at7898"/>
<dbReference type="Proteomes" id="UP000087266">
    <property type="component" value="Chromosome ssa14"/>
</dbReference>
<dbReference type="Bgee" id="ENSSSAG00000068313">
    <property type="expression patterns" value="Expressed in head kidney and 22 other cell types or tissues"/>
</dbReference>
<dbReference type="GO" id="GO:0005737">
    <property type="term" value="C:cytoplasm"/>
    <property type="evidence" value="ECO:0007669"/>
    <property type="project" value="TreeGrafter"/>
</dbReference>
<dbReference type="GO" id="GO:0045087">
    <property type="term" value="P:innate immune response"/>
    <property type="evidence" value="ECO:0007669"/>
    <property type="project" value="UniProtKB-KW"/>
</dbReference>
<dbReference type="GO" id="GO:0042981">
    <property type="term" value="P:regulation of apoptotic process"/>
    <property type="evidence" value="ECO:0007669"/>
    <property type="project" value="InterPro"/>
</dbReference>
<dbReference type="FunFam" id="1.20.1440.160:FF:000001">
    <property type="entry name" value="Tumor necrosis factor alpha-induced protein 8-like 1"/>
    <property type="match status" value="1"/>
</dbReference>
<dbReference type="Gene3D" id="1.20.1440.160">
    <property type="entry name" value="Tumor necrosis factor alpha-induced protein 8-like"/>
    <property type="match status" value="1"/>
</dbReference>
<dbReference type="InterPro" id="IPR008477">
    <property type="entry name" value="TNFAIP8-like"/>
</dbReference>
<dbReference type="InterPro" id="IPR038355">
    <property type="entry name" value="TNFAIP8_sf"/>
</dbReference>
<dbReference type="PANTHER" id="PTHR12757:SF4">
    <property type="entry name" value="TUMOR NECROSIS FACTOR ALPHA-INDUCED PROTEIN 8-LIKE PROTEIN 2"/>
    <property type="match status" value="1"/>
</dbReference>
<dbReference type="PANTHER" id="PTHR12757">
    <property type="entry name" value="TUMOR NECROSIS FACTOR INDUCED PROTEIN"/>
    <property type="match status" value="1"/>
</dbReference>
<dbReference type="Pfam" id="PF05527">
    <property type="entry name" value="DUF758"/>
    <property type="match status" value="1"/>
</dbReference>
<accession>B5X737</accession>
<proteinExistence type="evidence at transcript level"/>
<name>TP8L2_SALSA</name>
<reference key="1">
    <citation type="journal article" date="2010" name="BMC Genomics">
        <title>Salmo salar and Esox lucius full-length cDNA sequences reveal changes in evolutionary pressures on a post-tetraploidization genome.</title>
        <authorList>
            <person name="Leong J.S."/>
            <person name="Jantzen S.G."/>
            <person name="von Schalburg K.R."/>
            <person name="Cooper G.A."/>
            <person name="Messmer A.M."/>
            <person name="Liao N.Y."/>
            <person name="Munro S."/>
            <person name="Moore R."/>
            <person name="Holt R.A."/>
            <person name="Jones S.J."/>
            <person name="Davidson W.S."/>
            <person name="Koop B.F."/>
        </authorList>
    </citation>
    <scope>NUCLEOTIDE SEQUENCE [LARGE SCALE MRNA]</scope>
    <source>
        <tissue>Brain</tissue>
    </source>
</reference>
<feature type="chain" id="PRO_0000369398" description="Tumor necrosis factor alpha-induced protein 8-like protein 2">
    <location>
        <begin position="1"/>
        <end position="186"/>
    </location>
</feature>
<sequence length="186" mass="21299">MESFSSKDMAMKAQKKILSHMASKSMVQMLIDDTSSEILDELYRISKEHSGNRTEAQKVVKDLVKVVVKVGVLFRHNRFSKEELSLAQDFKKKLHQGVMTAISFQEVEFTFDKAVMTELLTDCRDILLKLVEKHLTLKSFGRIRHVFNHYSDPDLLTNLYTPGGPLWPNLTKICNGLNKLVEEGKL</sequence>
<organism>
    <name type="scientific">Salmo salar</name>
    <name type="common">Atlantic salmon</name>
    <dbReference type="NCBI Taxonomy" id="8030"/>
    <lineage>
        <taxon>Eukaryota</taxon>
        <taxon>Metazoa</taxon>
        <taxon>Chordata</taxon>
        <taxon>Craniata</taxon>
        <taxon>Vertebrata</taxon>
        <taxon>Euteleostomi</taxon>
        <taxon>Actinopterygii</taxon>
        <taxon>Neopterygii</taxon>
        <taxon>Teleostei</taxon>
        <taxon>Protacanthopterygii</taxon>
        <taxon>Salmoniformes</taxon>
        <taxon>Salmonidae</taxon>
        <taxon>Salmoninae</taxon>
        <taxon>Salmo</taxon>
    </lineage>
</organism>
<protein>
    <recommendedName>
        <fullName>Tumor necrosis factor alpha-induced protein 8-like protein 2</fullName>
        <shortName>TIPE2</shortName>
        <shortName>TNF alpha-induced protein 8-like protein 2</shortName>
        <shortName>TNFAIP8-like protein 2</shortName>
    </recommendedName>
</protein>